<dbReference type="EC" id="3.6.1.12"/>
<dbReference type="EMBL" id="AF374621">
    <property type="protein sequence ID" value="AAK66986.1"/>
    <property type="molecule type" value="Genomic_DNA"/>
</dbReference>
<dbReference type="SMR" id="Q94MV8"/>
<dbReference type="GO" id="GO:0047840">
    <property type="term" value="F:dCTP diphosphatase activity"/>
    <property type="evidence" value="ECO:0007669"/>
    <property type="project" value="UniProtKB-EC"/>
</dbReference>
<dbReference type="SUPFAM" id="SSF101386">
    <property type="entry name" value="all-alpha NTP pyrophosphatases"/>
    <property type="match status" value="1"/>
</dbReference>
<reference key="1">
    <citation type="journal article" date="2001" name="Proc. Natl. Acad. Sci. U.S.A.">
        <title>Two recombination-dependent DNA replication pathways of bacteriophage T4, and their roles in mutagenesis and horizontal gene transfer.</title>
        <authorList>
            <person name="Mosig G."/>
            <person name="Gewin J."/>
            <person name="Luder A."/>
            <person name="Colowick N."/>
            <person name="Vo D."/>
        </authorList>
    </citation>
    <scope>NUCLEOTIDE SEQUENCE [GENOMIC DNA]</scope>
</reference>
<organism>
    <name type="scientific">Enterobacteria phage LZ5</name>
    <name type="common">Bacteriophage LZ5</name>
    <dbReference type="NCBI Taxonomy" id="37363"/>
    <lineage>
        <taxon>Viruses</taxon>
        <taxon>Duplodnaviria</taxon>
        <taxon>Heunggongvirae</taxon>
        <taxon>Uroviricota</taxon>
        <taxon>Caudoviricetes</taxon>
        <taxon>Straboviridae</taxon>
        <taxon>Tevenvirinae</taxon>
        <taxon>Tequatrovirus</taxon>
    </lineage>
</organism>
<protein>
    <recommendedName>
        <fullName>dCTP pyrophosphatase</fullName>
        <shortName>dCTPase</shortName>
        <ecNumber>3.6.1.12</ecNumber>
    </recommendedName>
    <alternativeName>
        <fullName>Deoxycytidine-triphosphatase</fullName>
    </alternativeName>
</protein>
<organismHost>
    <name type="scientific">Escherichia coli</name>
    <dbReference type="NCBI Taxonomy" id="562"/>
</organismHost>
<name>VG56_BPLZ5</name>
<feature type="chain" id="PRO_0000165045" description="dCTP pyrophosphatase">
    <location>
        <begin position="1"/>
        <end position="172"/>
    </location>
</feature>
<accession>Q94MV8</accession>
<gene>
    <name type="primary">56</name>
</gene>
<proteinExistence type="predicted"/>
<keyword id="KW-0378">Hydrolase</keyword>
<sequence>MAHFNECAHLIEGVDKANRAYAENIMHNIDPLQVMLDMQRHLQIRLANDKPETNRHPDSLETAGEVLAWLRNQDDYIADETRELYTSLGGMSNGEKEASAVWKPWKKRYSEMQSKKIQDLSPEDQLEIKFELIDQFHFFMNKFIALGMSAEEIFKLYYLKNAENFARQDRGY</sequence>
<comment type="catalytic activity">
    <reaction>
        <text>dCTP + H2O = dCMP + diphosphate + H(+)</text>
        <dbReference type="Rhea" id="RHEA:22636"/>
        <dbReference type="ChEBI" id="CHEBI:15377"/>
        <dbReference type="ChEBI" id="CHEBI:15378"/>
        <dbReference type="ChEBI" id="CHEBI:33019"/>
        <dbReference type="ChEBI" id="CHEBI:57566"/>
        <dbReference type="ChEBI" id="CHEBI:61481"/>
        <dbReference type="EC" id="3.6.1.12"/>
    </reaction>
</comment>